<gene>
    <name evidence="1" type="primary">eno</name>
    <name type="ordered locus">gll2121</name>
</gene>
<reference key="1">
    <citation type="journal article" date="2003" name="DNA Res.">
        <title>Complete genome structure of Gloeobacter violaceus PCC 7421, a cyanobacterium that lacks thylakoids.</title>
        <authorList>
            <person name="Nakamura Y."/>
            <person name="Kaneko T."/>
            <person name="Sato S."/>
            <person name="Mimuro M."/>
            <person name="Miyashita H."/>
            <person name="Tsuchiya T."/>
            <person name="Sasamoto S."/>
            <person name="Watanabe A."/>
            <person name="Kawashima K."/>
            <person name="Kishida Y."/>
            <person name="Kiyokawa C."/>
            <person name="Kohara M."/>
            <person name="Matsumoto M."/>
            <person name="Matsuno A."/>
            <person name="Nakazaki N."/>
            <person name="Shimpo S."/>
            <person name="Takeuchi C."/>
            <person name="Yamada M."/>
            <person name="Tabata S."/>
        </authorList>
    </citation>
    <scope>NUCLEOTIDE SEQUENCE [LARGE SCALE GENOMIC DNA]</scope>
    <source>
        <strain>ATCC 29082 / PCC 7421</strain>
    </source>
</reference>
<proteinExistence type="inferred from homology"/>
<name>ENO_GLOVI</name>
<comment type="function">
    <text evidence="1">Catalyzes the reversible conversion of 2-phosphoglycerate (2-PG) into phosphoenolpyruvate (PEP). It is essential for the degradation of carbohydrates via glycolysis.</text>
</comment>
<comment type="catalytic activity">
    <reaction evidence="1">
        <text>(2R)-2-phosphoglycerate = phosphoenolpyruvate + H2O</text>
        <dbReference type="Rhea" id="RHEA:10164"/>
        <dbReference type="ChEBI" id="CHEBI:15377"/>
        <dbReference type="ChEBI" id="CHEBI:58289"/>
        <dbReference type="ChEBI" id="CHEBI:58702"/>
        <dbReference type="EC" id="4.2.1.11"/>
    </reaction>
</comment>
<comment type="cofactor">
    <cofactor evidence="1">
        <name>Mg(2+)</name>
        <dbReference type="ChEBI" id="CHEBI:18420"/>
    </cofactor>
    <text evidence="1">Binds a second Mg(2+) ion via substrate during catalysis.</text>
</comment>
<comment type="pathway">
    <text evidence="1">Carbohydrate degradation; glycolysis; pyruvate from D-glyceraldehyde 3-phosphate: step 4/5.</text>
</comment>
<comment type="subcellular location">
    <subcellularLocation>
        <location evidence="1">Cytoplasm</location>
    </subcellularLocation>
    <subcellularLocation>
        <location evidence="1">Secreted</location>
    </subcellularLocation>
    <subcellularLocation>
        <location evidence="1">Cell surface</location>
    </subcellularLocation>
    <text evidence="1">Fractions of enolase are present in both the cytoplasm and on the cell surface.</text>
</comment>
<comment type="similarity">
    <text evidence="1">Belongs to the enolase family.</text>
</comment>
<feature type="chain" id="PRO_0000133892" description="Enolase">
    <location>
        <begin position="1"/>
        <end position="425"/>
    </location>
</feature>
<feature type="region of interest" description="Disordered" evidence="2">
    <location>
        <begin position="31"/>
        <end position="54"/>
    </location>
</feature>
<feature type="compositionally biased region" description="Basic and acidic residues" evidence="2">
    <location>
        <begin position="43"/>
        <end position="54"/>
    </location>
</feature>
<feature type="active site" description="Proton donor" evidence="1">
    <location>
        <position position="204"/>
    </location>
</feature>
<feature type="active site" description="Proton acceptor" evidence="1">
    <location>
        <position position="337"/>
    </location>
</feature>
<feature type="binding site" evidence="1">
    <location>
        <position position="162"/>
    </location>
    <ligand>
        <name>(2R)-2-phosphoglycerate</name>
        <dbReference type="ChEBI" id="CHEBI:58289"/>
    </ligand>
</feature>
<feature type="binding site" evidence="1">
    <location>
        <position position="241"/>
    </location>
    <ligand>
        <name>Mg(2+)</name>
        <dbReference type="ChEBI" id="CHEBI:18420"/>
    </ligand>
</feature>
<feature type="binding site" evidence="1">
    <location>
        <position position="285"/>
    </location>
    <ligand>
        <name>Mg(2+)</name>
        <dbReference type="ChEBI" id="CHEBI:18420"/>
    </ligand>
</feature>
<feature type="binding site" evidence="1">
    <location>
        <position position="312"/>
    </location>
    <ligand>
        <name>Mg(2+)</name>
        <dbReference type="ChEBI" id="CHEBI:18420"/>
    </ligand>
</feature>
<feature type="binding site" evidence="1">
    <location>
        <position position="337"/>
    </location>
    <ligand>
        <name>(2R)-2-phosphoglycerate</name>
        <dbReference type="ChEBI" id="CHEBI:58289"/>
    </ligand>
</feature>
<feature type="binding site" evidence="1">
    <location>
        <position position="366"/>
    </location>
    <ligand>
        <name>(2R)-2-phosphoglycerate</name>
        <dbReference type="ChEBI" id="CHEBI:58289"/>
    </ligand>
</feature>
<feature type="binding site" evidence="1">
    <location>
        <position position="367"/>
    </location>
    <ligand>
        <name>(2R)-2-phosphoglycerate</name>
        <dbReference type="ChEBI" id="CHEBI:58289"/>
    </ligand>
</feature>
<feature type="binding site" evidence="1">
    <location>
        <position position="388"/>
    </location>
    <ligand>
        <name>(2R)-2-phosphoglycerate</name>
        <dbReference type="ChEBI" id="CHEBI:58289"/>
    </ligand>
</feature>
<keyword id="KW-0963">Cytoplasm</keyword>
<keyword id="KW-0324">Glycolysis</keyword>
<keyword id="KW-0456">Lyase</keyword>
<keyword id="KW-0460">Magnesium</keyword>
<keyword id="KW-0479">Metal-binding</keyword>
<keyword id="KW-1185">Reference proteome</keyword>
<keyword id="KW-0964">Secreted</keyword>
<sequence length="425" mass="45452">MLITSIEAHEILDSRGNPTVEAQVALENGTTGSAIVPSGASTGEKEAVELRDSDPKRYGGKGVLSAVANVNDSIAPEIIGMEVTDQRSIDRKMIEIDGTANKATLGANAILAVSMAVARTAALSLGLPLYRYLGGTNASLLPVPCMNVINGGKHADNTVDFQEFMIAPHNAPNFAEALRMGAETFHALKSILRGKGYSTGVGDEGGFAPDLKSNEEAVEVILLAIEKAGYRPGEDISICLDPATSEMWKDGKYLFFKSDQSTKTSEEMVDLWASWAGQYPIVSLEDGMGENDWEGWKMLTDRIGATVELVGDDLFCTNAKILAEGIEKGVANSILIKLNQIGSVSETLDTIELAVKHNYKCFVSHRSGETEDTTIADLTVATAAGQIKTGSGCRSERVAKFNQLLRIERQLGEAARFAGKSAFAR</sequence>
<dbReference type="EC" id="4.2.1.11" evidence="1"/>
<dbReference type="EMBL" id="BA000045">
    <property type="protein sequence ID" value="BAC90062.1"/>
    <property type="molecule type" value="Genomic_DNA"/>
</dbReference>
<dbReference type="RefSeq" id="NP_925067.1">
    <property type="nucleotide sequence ID" value="NC_005125.1"/>
</dbReference>
<dbReference type="RefSeq" id="WP_011142119.1">
    <property type="nucleotide sequence ID" value="NC_005125.1"/>
</dbReference>
<dbReference type="SMR" id="Q7NIR1"/>
<dbReference type="FunCoup" id="Q7NIR1">
    <property type="interactions" value="319"/>
</dbReference>
<dbReference type="STRING" id="251221.gene:10759616"/>
<dbReference type="EnsemblBacteria" id="BAC90062">
    <property type="protein sequence ID" value="BAC90062"/>
    <property type="gene ID" value="BAC90062"/>
</dbReference>
<dbReference type="KEGG" id="gvi:gll2121"/>
<dbReference type="PATRIC" id="fig|251221.4.peg.2156"/>
<dbReference type="eggNOG" id="COG0148">
    <property type="taxonomic scope" value="Bacteria"/>
</dbReference>
<dbReference type="HOGENOM" id="CLU_031223_2_1_3"/>
<dbReference type="InParanoid" id="Q7NIR1"/>
<dbReference type="OrthoDB" id="9804716at2"/>
<dbReference type="PhylomeDB" id="Q7NIR1"/>
<dbReference type="UniPathway" id="UPA00109">
    <property type="reaction ID" value="UER00187"/>
</dbReference>
<dbReference type="Proteomes" id="UP000000557">
    <property type="component" value="Chromosome"/>
</dbReference>
<dbReference type="GO" id="GO:0009986">
    <property type="term" value="C:cell surface"/>
    <property type="evidence" value="ECO:0007669"/>
    <property type="project" value="UniProtKB-SubCell"/>
</dbReference>
<dbReference type="GO" id="GO:0005576">
    <property type="term" value="C:extracellular region"/>
    <property type="evidence" value="ECO:0007669"/>
    <property type="project" value="UniProtKB-SubCell"/>
</dbReference>
<dbReference type="GO" id="GO:0000015">
    <property type="term" value="C:phosphopyruvate hydratase complex"/>
    <property type="evidence" value="ECO:0000318"/>
    <property type="project" value="GO_Central"/>
</dbReference>
<dbReference type="GO" id="GO:0000287">
    <property type="term" value="F:magnesium ion binding"/>
    <property type="evidence" value="ECO:0007669"/>
    <property type="project" value="UniProtKB-UniRule"/>
</dbReference>
<dbReference type="GO" id="GO:0004634">
    <property type="term" value="F:phosphopyruvate hydratase activity"/>
    <property type="evidence" value="ECO:0000318"/>
    <property type="project" value="GO_Central"/>
</dbReference>
<dbReference type="GO" id="GO:0006096">
    <property type="term" value="P:glycolytic process"/>
    <property type="evidence" value="ECO:0000318"/>
    <property type="project" value="GO_Central"/>
</dbReference>
<dbReference type="CDD" id="cd03313">
    <property type="entry name" value="enolase"/>
    <property type="match status" value="1"/>
</dbReference>
<dbReference type="FunFam" id="3.20.20.120:FF:000001">
    <property type="entry name" value="Enolase"/>
    <property type="match status" value="1"/>
</dbReference>
<dbReference type="FunFam" id="3.30.390.10:FF:000001">
    <property type="entry name" value="Enolase"/>
    <property type="match status" value="1"/>
</dbReference>
<dbReference type="Gene3D" id="3.20.20.120">
    <property type="entry name" value="Enolase-like C-terminal domain"/>
    <property type="match status" value="1"/>
</dbReference>
<dbReference type="Gene3D" id="3.30.390.10">
    <property type="entry name" value="Enolase-like, N-terminal domain"/>
    <property type="match status" value="1"/>
</dbReference>
<dbReference type="HAMAP" id="MF_00318">
    <property type="entry name" value="Enolase"/>
    <property type="match status" value="1"/>
</dbReference>
<dbReference type="InterPro" id="IPR000941">
    <property type="entry name" value="Enolase"/>
</dbReference>
<dbReference type="InterPro" id="IPR036849">
    <property type="entry name" value="Enolase-like_C_sf"/>
</dbReference>
<dbReference type="InterPro" id="IPR029017">
    <property type="entry name" value="Enolase-like_N"/>
</dbReference>
<dbReference type="InterPro" id="IPR020810">
    <property type="entry name" value="Enolase_C"/>
</dbReference>
<dbReference type="InterPro" id="IPR020809">
    <property type="entry name" value="Enolase_CS"/>
</dbReference>
<dbReference type="InterPro" id="IPR020811">
    <property type="entry name" value="Enolase_N"/>
</dbReference>
<dbReference type="NCBIfam" id="TIGR01060">
    <property type="entry name" value="eno"/>
    <property type="match status" value="1"/>
</dbReference>
<dbReference type="PANTHER" id="PTHR11902">
    <property type="entry name" value="ENOLASE"/>
    <property type="match status" value="1"/>
</dbReference>
<dbReference type="PANTHER" id="PTHR11902:SF1">
    <property type="entry name" value="ENOLASE"/>
    <property type="match status" value="1"/>
</dbReference>
<dbReference type="Pfam" id="PF00113">
    <property type="entry name" value="Enolase_C"/>
    <property type="match status" value="1"/>
</dbReference>
<dbReference type="Pfam" id="PF03952">
    <property type="entry name" value="Enolase_N"/>
    <property type="match status" value="1"/>
</dbReference>
<dbReference type="PIRSF" id="PIRSF001400">
    <property type="entry name" value="Enolase"/>
    <property type="match status" value="1"/>
</dbReference>
<dbReference type="PRINTS" id="PR00148">
    <property type="entry name" value="ENOLASE"/>
</dbReference>
<dbReference type="SFLD" id="SFLDS00001">
    <property type="entry name" value="Enolase"/>
    <property type="match status" value="1"/>
</dbReference>
<dbReference type="SFLD" id="SFLDF00002">
    <property type="entry name" value="enolase"/>
    <property type="match status" value="1"/>
</dbReference>
<dbReference type="SMART" id="SM01192">
    <property type="entry name" value="Enolase_C"/>
    <property type="match status" value="1"/>
</dbReference>
<dbReference type="SMART" id="SM01193">
    <property type="entry name" value="Enolase_N"/>
    <property type="match status" value="1"/>
</dbReference>
<dbReference type="SUPFAM" id="SSF51604">
    <property type="entry name" value="Enolase C-terminal domain-like"/>
    <property type="match status" value="1"/>
</dbReference>
<dbReference type="SUPFAM" id="SSF54826">
    <property type="entry name" value="Enolase N-terminal domain-like"/>
    <property type="match status" value="1"/>
</dbReference>
<dbReference type="PROSITE" id="PS00164">
    <property type="entry name" value="ENOLASE"/>
    <property type="match status" value="1"/>
</dbReference>
<protein>
    <recommendedName>
        <fullName evidence="1">Enolase</fullName>
        <ecNumber evidence="1">4.2.1.11</ecNumber>
    </recommendedName>
    <alternativeName>
        <fullName evidence="1">2-phospho-D-glycerate hydro-lyase</fullName>
    </alternativeName>
    <alternativeName>
        <fullName evidence="1">2-phosphoglycerate dehydratase</fullName>
    </alternativeName>
</protein>
<accession>Q7NIR1</accession>
<organism>
    <name type="scientific">Gloeobacter violaceus (strain ATCC 29082 / PCC 7421)</name>
    <dbReference type="NCBI Taxonomy" id="251221"/>
    <lineage>
        <taxon>Bacteria</taxon>
        <taxon>Bacillati</taxon>
        <taxon>Cyanobacteriota</taxon>
        <taxon>Cyanophyceae</taxon>
        <taxon>Gloeobacterales</taxon>
        <taxon>Gloeobacteraceae</taxon>
        <taxon>Gloeobacter</taxon>
    </lineage>
</organism>
<evidence type="ECO:0000255" key="1">
    <source>
        <dbReference type="HAMAP-Rule" id="MF_00318"/>
    </source>
</evidence>
<evidence type="ECO:0000256" key="2">
    <source>
        <dbReference type="SAM" id="MobiDB-lite"/>
    </source>
</evidence>